<evidence type="ECO:0000255" key="1">
    <source>
        <dbReference type="HAMAP-Rule" id="MF_00313"/>
    </source>
</evidence>
<name>GLSA_FUSNN</name>
<gene>
    <name evidence="1" type="primary">glsA</name>
    <name type="ordered locus">FN1397</name>
</gene>
<reference key="1">
    <citation type="journal article" date="2002" name="J. Bacteriol.">
        <title>Genome sequence and analysis of the oral bacterium Fusobacterium nucleatum strain ATCC 25586.</title>
        <authorList>
            <person name="Kapatral V."/>
            <person name="Anderson I."/>
            <person name="Ivanova N."/>
            <person name="Reznik G."/>
            <person name="Los T."/>
            <person name="Lykidis A."/>
            <person name="Bhattacharyya A."/>
            <person name="Bartman A."/>
            <person name="Gardner W."/>
            <person name="Grechkin G."/>
            <person name="Zhu L."/>
            <person name="Vasieva O."/>
            <person name="Chu L."/>
            <person name="Kogan Y."/>
            <person name="Chaga O."/>
            <person name="Goltsman E."/>
            <person name="Bernal A."/>
            <person name="Larsen N."/>
            <person name="D'Souza M."/>
            <person name="Walunas T."/>
            <person name="Pusch G."/>
            <person name="Haselkorn R."/>
            <person name="Fonstein M."/>
            <person name="Kyrpides N.C."/>
            <person name="Overbeek R."/>
        </authorList>
    </citation>
    <scope>NUCLEOTIDE SEQUENCE [LARGE SCALE GENOMIC DNA]</scope>
    <source>
        <strain>ATCC 25586 / DSM 15643 / BCRC 10681 / CIP 101130 / JCM 8532 / KCTC 2640 / LMG 13131 / VPI 4355</strain>
    </source>
</reference>
<protein>
    <recommendedName>
        <fullName evidence="1">Glutaminase</fullName>
        <ecNumber evidence="1">3.5.1.2</ecNumber>
    </recommendedName>
</protein>
<feature type="chain" id="PRO_0000110613" description="Glutaminase">
    <location>
        <begin position="1"/>
        <end position="304"/>
    </location>
</feature>
<feature type="binding site" evidence="1">
    <location>
        <position position="61"/>
    </location>
    <ligand>
        <name>substrate</name>
    </ligand>
</feature>
<feature type="binding site" evidence="1">
    <location>
        <position position="113"/>
    </location>
    <ligand>
        <name>substrate</name>
    </ligand>
</feature>
<feature type="binding site" evidence="1">
    <location>
        <position position="158"/>
    </location>
    <ligand>
        <name>substrate</name>
    </ligand>
</feature>
<feature type="binding site" evidence="1">
    <location>
        <position position="165"/>
    </location>
    <ligand>
        <name>substrate</name>
    </ligand>
</feature>
<feature type="binding site" evidence="1">
    <location>
        <position position="189"/>
    </location>
    <ligand>
        <name>substrate</name>
    </ligand>
</feature>
<feature type="binding site" evidence="1">
    <location>
        <position position="240"/>
    </location>
    <ligand>
        <name>substrate</name>
    </ligand>
</feature>
<feature type="binding site" evidence="1">
    <location>
        <position position="258"/>
    </location>
    <ligand>
        <name>substrate</name>
    </ligand>
</feature>
<dbReference type="EC" id="3.5.1.2" evidence="1"/>
<dbReference type="EMBL" id="AE009951">
    <property type="protein sequence ID" value="AAL95590.1"/>
    <property type="molecule type" value="Genomic_DNA"/>
</dbReference>
<dbReference type="RefSeq" id="NP_604291.1">
    <property type="nucleotide sequence ID" value="NC_003454.1"/>
</dbReference>
<dbReference type="RefSeq" id="WP_005903278.1">
    <property type="nucleotide sequence ID" value="NZ_OZ209243.1"/>
</dbReference>
<dbReference type="SMR" id="Q8RDV3"/>
<dbReference type="FunCoup" id="Q8RDV3">
    <property type="interactions" value="40"/>
</dbReference>
<dbReference type="STRING" id="190304.FN1397"/>
<dbReference type="PaxDb" id="190304-FN1397"/>
<dbReference type="EnsemblBacteria" id="AAL95590">
    <property type="protein sequence ID" value="AAL95590"/>
    <property type="gene ID" value="FN1397"/>
</dbReference>
<dbReference type="GeneID" id="79784368"/>
<dbReference type="KEGG" id="fnu:FN1397"/>
<dbReference type="PATRIC" id="fig|190304.8.peg.1958"/>
<dbReference type="eggNOG" id="COG2066">
    <property type="taxonomic scope" value="Bacteria"/>
</dbReference>
<dbReference type="HOGENOM" id="CLU_027932_1_1_0"/>
<dbReference type="InParanoid" id="Q8RDV3"/>
<dbReference type="BioCyc" id="FNUC190304:G1FZS-1968-MONOMER"/>
<dbReference type="Proteomes" id="UP000002521">
    <property type="component" value="Chromosome"/>
</dbReference>
<dbReference type="GO" id="GO:0004359">
    <property type="term" value="F:glutaminase activity"/>
    <property type="evidence" value="ECO:0000318"/>
    <property type="project" value="GO_Central"/>
</dbReference>
<dbReference type="GO" id="GO:0006537">
    <property type="term" value="P:glutamate biosynthetic process"/>
    <property type="evidence" value="ECO:0000318"/>
    <property type="project" value="GO_Central"/>
</dbReference>
<dbReference type="GO" id="GO:0006543">
    <property type="term" value="P:glutamine catabolic process"/>
    <property type="evidence" value="ECO:0000318"/>
    <property type="project" value="GO_Central"/>
</dbReference>
<dbReference type="FunFam" id="3.40.710.10:FF:000005">
    <property type="entry name" value="Glutaminase"/>
    <property type="match status" value="1"/>
</dbReference>
<dbReference type="Gene3D" id="3.40.710.10">
    <property type="entry name" value="DD-peptidase/beta-lactamase superfamily"/>
    <property type="match status" value="1"/>
</dbReference>
<dbReference type="HAMAP" id="MF_00313">
    <property type="entry name" value="Glutaminase"/>
    <property type="match status" value="1"/>
</dbReference>
<dbReference type="InterPro" id="IPR012338">
    <property type="entry name" value="Beta-lactam/transpept-like"/>
</dbReference>
<dbReference type="InterPro" id="IPR015868">
    <property type="entry name" value="Glutaminase"/>
</dbReference>
<dbReference type="NCBIfam" id="TIGR03814">
    <property type="entry name" value="Gln_ase"/>
    <property type="match status" value="1"/>
</dbReference>
<dbReference type="PANTHER" id="PTHR12544">
    <property type="entry name" value="GLUTAMINASE"/>
    <property type="match status" value="1"/>
</dbReference>
<dbReference type="PANTHER" id="PTHR12544:SF29">
    <property type="entry name" value="GLUTAMINASE"/>
    <property type="match status" value="1"/>
</dbReference>
<dbReference type="Pfam" id="PF04960">
    <property type="entry name" value="Glutaminase"/>
    <property type="match status" value="1"/>
</dbReference>
<dbReference type="SUPFAM" id="SSF56601">
    <property type="entry name" value="beta-lactamase/transpeptidase-like"/>
    <property type="match status" value="1"/>
</dbReference>
<sequence length="304" mass="33083">MKELLKELVEKNRKFTADGNVANYIPELDKADKNALGIYVTTLDGQEFFAGDYNTKFTIQSISKIISLMLAILDNGEEYVFSKVGMEPSGDPFNSIRKLETSSRKKPYNPMINAGAIAVASMIKGKDDREKFSRLLNFAKLITEDDSLDLNYKIYIGESDTGFRNYSMAYFLKGEGIIEGNVNEALTVYFKQCSIEGTAKTISTLGKFLANDGVLSNGERILTTRMAKIIKTLMVTCGMYDSSGEFAVRVGIPSKSGVGGGICSVVPGKMGIGVYGPSLDKKGNSLAGGHLLEDLSAELSLNIF</sequence>
<comment type="catalytic activity">
    <reaction evidence="1">
        <text>L-glutamine + H2O = L-glutamate + NH4(+)</text>
        <dbReference type="Rhea" id="RHEA:15889"/>
        <dbReference type="ChEBI" id="CHEBI:15377"/>
        <dbReference type="ChEBI" id="CHEBI:28938"/>
        <dbReference type="ChEBI" id="CHEBI:29985"/>
        <dbReference type="ChEBI" id="CHEBI:58359"/>
        <dbReference type="EC" id="3.5.1.2"/>
    </reaction>
</comment>
<comment type="subunit">
    <text evidence="1">Homotetramer.</text>
</comment>
<comment type="similarity">
    <text evidence="1">Belongs to the glutaminase family.</text>
</comment>
<organism>
    <name type="scientific">Fusobacterium nucleatum subsp. nucleatum (strain ATCC 25586 / DSM 15643 / BCRC 10681 / CIP 101130 / JCM 8532 / KCTC 2640 / LMG 13131 / VPI 4355)</name>
    <dbReference type="NCBI Taxonomy" id="190304"/>
    <lineage>
        <taxon>Bacteria</taxon>
        <taxon>Fusobacteriati</taxon>
        <taxon>Fusobacteriota</taxon>
        <taxon>Fusobacteriia</taxon>
        <taxon>Fusobacteriales</taxon>
        <taxon>Fusobacteriaceae</taxon>
        <taxon>Fusobacterium</taxon>
    </lineage>
</organism>
<accession>Q8RDV3</accession>
<keyword id="KW-0378">Hydrolase</keyword>
<keyword id="KW-1185">Reference proteome</keyword>
<proteinExistence type="inferred from homology"/>